<sequence>MEFEVKSPILGFESVRGMRLEKIDDLFMKLKNAEADSPVFTLVNPFLLREYDFEIPLAMKVLLDLKENTNLLVLNIMIIHTPLESSTVNFLAPVIFNFDNHTMGQLVLESHRYPAYGLAETISSFFNSDSTPTQEA</sequence>
<accession>Q7MQV6</accession>
<evidence type="ECO:0000255" key="1">
    <source>
        <dbReference type="HAMAP-Rule" id="MF_01185"/>
    </source>
</evidence>
<reference key="1">
    <citation type="journal article" date="2003" name="Proc. Natl. Acad. Sci. U.S.A.">
        <title>Complete genome sequence and analysis of Wolinella succinogenes.</title>
        <authorList>
            <person name="Baar C."/>
            <person name="Eppinger M."/>
            <person name="Raddatz G."/>
            <person name="Simon J."/>
            <person name="Lanz C."/>
            <person name="Klimmek O."/>
            <person name="Nandakumar R."/>
            <person name="Gross R."/>
            <person name="Rosinus A."/>
            <person name="Keller H."/>
            <person name="Jagtap P."/>
            <person name="Linke B."/>
            <person name="Meyer F."/>
            <person name="Lederer H."/>
            <person name="Schuster S.C."/>
        </authorList>
    </citation>
    <scope>NUCLEOTIDE SEQUENCE [LARGE SCALE GENOMIC DNA]</scope>
    <source>
        <strain>ATCC 29543 / DSM 1740 / CCUG 13145 / JCM 31913 / LMG 7466 / NCTC 11488 / FDC 602W</strain>
    </source>
</reference>
<name>FLIW2_WOLSU</name>
<keyword id="KW-1005">Bacterial flagellum biogenesis</keyword>
<keyword id="KW-0143">Chaperone</keyword>
<keyword id="KW-0963">Cytoplasm</keyword>
<keyword id="KW-1185">Reference proteome</keyword>
<keyword id="KW-0810">Translation regulation</keyword>
<protein>
    <recommendedName>
        <fullName evidence="1">Flagellar assembly factor FliW 2</fullName>
    </recommendedName>
</protein>
<feature type="chain" id="PRO_0000273016" description="Flagellar assembly factor FliW 2">
    <location>
        <begin position="1"/>
        <end position="136"/>
    </location>
</feature>
<proteinExistence type="inferred from homology"/>
<comment type="function">
    <text evidence="1">Acts as an anti-CsrA protein, binds CsrA and prevents it from repressing translation of its target genes, one of which is flagellin. Binds to flagellin and participates in the assembly of the flagellum.</text>
</comment>
<comment type="subunit">
    <text evidence="1">Interacts with translational regulator CsrA and flagellin(s).</text>
</comment>
<comment type="subcellular location">
    <subcellularLocation>
        <location evidence="1">Cytoplasm</location>
    </subcellularLocation>
</comment>
<comment type="similarity">
    <text evidence="1">Belongs to the FliW family.</text>
</comment>
<gene>
    <name evidence="1" type="primary">fliW2</name>
    <name type="ordered locus">WS1974</name>
</gene>
<organism>
    <name type="scientific">Wolinella succinogenes (strain ATCC 29543 / DSM 1740 / CCUG 13145 / JCM 31913 / LMG 7466 / NCTC 11488 / FDC 602W)</name>
    <name type="common">Vibrio succinogenes</name>
    <dbReference type="NCBI Taxonomy" id="273121"/>
    <lineage>
        <taxon>Bacteria</taxon>
        <taxon>Pseudomonadati</taxon>
        <taxon>Campylobacterota</taxon>
        <taxon>Epsilonproteobacteria</taxon>
        <taxon>Campylobacterales</taxon>
        <taxon>Helicobacteraceae</taxon>
        <taxon>Wolinella</taxon>
    </lineage>
</organism>
<dbReference type="EMBL" id="BX571662">
    <property type="protein sequence ID" value="CAE10977.1"/>
    <property type="molecule type" value="Genomic_DNA"/>
</dbReference>
<dbReference type="RefSeq" id="WP_011139759.1">
    <property type="nucleotide sequence ID" value="NC_005090.1"/>
</dbReference>
<dbReference type="SMR" id="Q7MQV6"/>
<dbReference type="STRING" id="273121.WS1974"/>
<dbReference type="DNASU" id="2553975"/>
<dbReference type="KEGG" id="wsu:WS1974"/>
<dbReference type="eggNOG" id="COG1699">
    <property type="taxonomic scope" value="Bacteria"/>
</dbReference>
<dbReference type="HOGENOM" id="CLU_112356_2_0_7"/>
<dbReference type="Proteomes" id="UP000000422">
    <property type="component" value="Chromosome"/>
</dbReference>
<dbReference type="GO" id="GO:0005737">
    <property type="term" value="C:cytoplasm"/>
    <property type="evidence" value="ECO:0007669"/>
    <property type="project" value="UniProtKB-SubCell"/>
</dbReference>
<dbReference type="GO" id="GO:0044780">
    <property type="term" value="P:bacterial-type flagellum assembly"/>
    <property type="evidence" value="ECO:0007669"/>
    <property type="project" value="UniProtKB-UniRule"/>
</dbReference>
<dbReference type="GO" id="GO:0006417">
    <property type="term" value="P:regulation of translation"/>
    <property type="evidence" value="ECO:0007669"/>
    <property type="project" value="UniProtKB-KW"/>
</dbReference>
<dbReference type="Gene3D" id="2.30.290.10">
    <property type="entry name" value="BH3618-like"/>
    <property type="match status" value="1"/>
</dbReference>
<dbReference type="HAMAP" id="MF_01185">
    <property type="entry name" value="FliW"/>
    <property type="match status" value="1"/>
</dbReference>
<dbReference type="InterPro" id="IPR003775">
    <property type="entry name" value="Flagellar_assembly_factor_FliW"/>
</dbReference>
<dbReference type="InterPro" id="IPR024046">
    <property type="entry name" value="Flagellar_assmbl_FliW_dom_sf"/>
</dbReference>
<dbReference type="NCBIfam" id="NF009790">
    <property type="entry name" value="PRK13282.1"/>
    <property type="match status" value="1"/>
</dbReference>
<dbReference type="PANTHER" id="PTHR39190">
    <property type="entry name" value="FLAGELLAR ASSEMBLY FACTOR FLIW"/>
    <property type="match status" value="1"/>
</dbReference>
<dbReference type="PANTHER" id="PTHR39190:SF1">
    <property type="entry name" value="FLAGELLAR ASSEMBLY FACTOR FLIW"/>
    <property type="match status" value="1"/>
</dbReference>
<dbReference type="Pfam" id="PF02623">
    <property type="entry name" value="FliW"/>
    <property type="match status" value="1"/>
</dbReference>
<dbReference type="SUPFAM" id="SSF141457">
    <property type="entry name" value="BH3618-like"/>
    <property type="match status" value="1"/>
</dbReference>